<accession>Q5PPJ2</accession>
<protein>
    <recommendedName>
        <fullName>Serine/Arginine-related protein 53</fullName>
        <shortName>SRrp53</shortName>
    </recommendedName>
    <alternativeName>
        <fullName>Arginine/serine-rich coiled-coil protein 1</fullName>
    </alternativeName>
</protein>
<feature type="chain" id="PRO_0000097498" description="Serine/Arginine-related protein 53">
    <location>
        <begin position="1"/>
        <end position="334"/>
    </location>
</feature>
<feature type="region of interest" description="Disordered" evidence="4">
    <location>
        <begin position="1"/>
        <end position="173"/>
    </location>
</feature>
<feature type="region of interest" description="Disordered" evidence="4">
    <location>
        <begin position="201"/>
        <end position="222"/>
    </location>
</feature>
<feature type="region of interest" description="Disordered" evidence="4">
    <location>
        <begin position="241"/>
        <end position="290"/>
    </location>
</feature>
<feature type="coiled-coil region" evidence="3">
    <location>
        <begin position="180"/>
        <end position="234"/>
    </location>
</feature>
<feature type="compositionally biased region" description="Basic and acidic residues" evidence="4">
    <location>
        <begin position="1"/>
        <end position="13"/>
    </location>
</feature>
<feature type="compositionally biased region" description="Basic residues" evidence="4">
    <location>
        <begin position="14"/>
        <end position="24"/>
    </location>
</feature>
<feature type="compositionally biased region" description="Basic and acidic residues" evidence="4">
    <location>
        <begin position="44"/>
        <end position="62"/>
    </location>
</feature>
<feature type="compositionally biased region" description="Basic residues" evidence="4">
    <location>
        <begin position="78"/>
        <end position="118"/>
    </location>
</feature>
<feature type="compositionally biased region" description="Basic and acidic residues" evidence="4">
    <location>
        <begin position="132"/>
        <end position="166"/>
    </location>
</feature>
<feature type="compositionally biased region" description="Basic and acidic residues" evidence="4">
    <location>
        <begin position="201"/>
        <end position="218"/>
    </location>
</feature>
<feature type="compositionally biased region" description="Basic and acidic residues" evidence="4">
    <location>
        <begin position="247"/>
        <end position="262"/>
    </location>
</feature>
<gene>
    <name type="primary">Rsrc1</name>
    <name type="synonym">Srrp53</name>
</gene>
<sequence>MGRRSSDTEEESRSKRKKKHRRRSSSSSSSDSRTYSRKKGGRRPRSESRSWSRDRQPRSHSYERRRRRRSSSSSSYGSRRKRSRSRSRGRGKSYRVQRSRSKSRTRRSRSRPRPRSHSRSSERSSHRRTRSRSRDRDRRKVRDKEKREKEKDKGKDKEAHTIKRGDCGNIKAGLEHLPPAEQAKARLQLVLEAAAKADEALKAKERNEEEAKRRKEEDQATLGEQVKRVKEIEAIESDSFVQQTFRSSKDVKKSVEPSEVKHVTPASGPASVAADPPSTGKEIDPDSIPTAIKYQDDNSLAHPNLFIEKAEAEEKWFKRLIALRQERLMGSPVA</sequence>
<keyword id="KW-0175">Coiled coil</keyword>
<keyword id="KW-0963">Cytoplasm</keyword>
<keyword id="KW-0507">mRNA processing</keyword>
<keyword id="KW-0508">mRNA splicing</keyword>
<keyword id="KW-0539">Nucleus</keyword>
<keyword id="KW-0597">Phosphoprotein</keyword>
<keyword id="KW-1185">Reference proteome</keyword>
<evidence type="ECO:0000250" key="1"/>
<evidence type="ECO:0000250" key="2">
    <source>
        <dbReference type="UniProtKB" id="Q9DBU6"/>
    </source>
</evidence>
<evidence type="ECO:0000255" key="3"/>
<evidence type="ECO:0000256" key="4">
    <source>
        <dbReference type="SAM" id="MobiDB-lite"/>
    </source>
</evidence>
<reference key="1">
    <citation type="journal article" date="2004" name="Genome Res.">
        <title>The status, quality, and expansion of the NIH full-length cDNA project: the Mammalian Gene Collection (MGC).</title>
        <authorList>
            <consortium name="The MGC Project Team"/>
        </authorList>
    </citation>
    <scope>NUCLEOTIDE SEQUENCE [LARGE SCALE MRNA]</scope>
    <source>
        <tissue>Brain</tissue>
    </source>
</reference>
<name>RSRC1_RAT</name>
<organism>
    <name type="scientific">Rattus norvegicus</name>
    <name type="common">Rat</name>
    <dbReference type="NCBI Taxonomy" id="10116"/>
    <lineage>
        <taxon>Eukaryota</taxon>
        <taxon>Metazoa</taxon>
        <taxon>Chordata</taxon>
        <taxon>Craniata</taxon>
        <taxon>Vertebrata</taxon>
        <taxon>Euteleostomi</taxon>
        <taxon>Mammalia</taxon>
        <taxon>Eutheria</taxon>
        <taxon>Euarchontoglires</taxon>
        <taxon>Glires</taxon>
        <taxon>Rodentia</taxon>
        <taxon>Myomorpha</taxon>
        <taxon>Muroidea</taxon>
        <taxon>Muridae</taxon>
        <taxon>Murinae</taxon>
        <taxon>Rattus</taxon>
    </lineage>
</organism>
<comment type="function">
    <text evidence="1">Plays a role in pre-mRNA splicing. Involved in both constitutive and alternative pre-mRNA splicing. May have a role in the recognition of the 3' splice site during the second step of splicing (By similarity).</text>
</comment>
<comment type="subunit">
    <text evidence="1">Interacts (via Arg/Ser-rich domain) with LUC7L3, RBM39 and RSF1.</text>
</comment>
<comment type="subcellular location">
    <subcellularLocation>
        <location evidence="1">Nucleus speckle</location>
    </subcellularLocation>
    <subcellularLocation>
        <location evidence="1">Nucleus</location>
    </subcellularLocation>
    <subcellularLocation>
        <location evidence="1">Cytoplasm</location>
    </subcellularLocation>
    <text evidence="1">Shuttles between the nucleus and cytoplasm.</text>
</comment>
<comment type="PTM">
    <text evidence="2">Phosphorylated.</text>
</comment>
<dbReference type="EMBL" id="BC087665">
    <property type="protein sequence ID" value="AAH87665.1"/>
    <property type="molecule type" value="mRNA"/>
</dbReference>
<dbReference type="RefSeq" id="NP_001014194.1">
    <property type="nucleotide sequence ID" value="NM_001014172.2"/>
</dbReference>
<dbReference type="RefSeq" id="XP_038958557.1">
    <property type="nucleotide sequence ID" value="XM_039102629.2"/>
</dbReference>
<dbReference type="RefSeq" id="XP_063138176.1">
    <property type="nucleotide sequence ID" value="XM_063282106.1"/>
</dbReference>
<dbReference type="RefSeq" id="XP_063138177.1">
    <property type="nucleotide sequence ID" value="XM_063282107.1"/>
</dbReference>
<dbReference type="SMR" id="Q5PPJ2"/>
<dbReference type="FunCoup" id="Q5PPJ2">
    <property type="interactions" value="1413"/>
</dbReference>
<dbReference type="STRING" id="10116.ENSRNOP00000074565"/>
<dbReference type="GlyGen" id="Q5PPJ2">
    <property type="glycosylation" value="1 site"/>
</dbReference>
<dbReference type="iPTMnet" id="Q5PPJ2"/>
<dbReference type="PhosphoSitePlus" id="Q5PPJ2"/>
<dbReference type="PaxDb" id="10116-ENSRNOP00000039808"/>
<dbReference type="Ensembl" id="ENSRNOT00000101324.1">
    <property type="protein sequence ID" value="ENSRNOP00000081280.1"/>
    <property type="gene ID" value="ENSRNOG00000062777.1"/>
</dbReference>
<dbReference type="GeneID" id="361956"/>
<dbReference type="KEGG" id="rno:361956"/>
<dbReference type="UCSC" id="RGD:1304968">
    <property type="organism name" value="rat"/>
</dbReference>
<dbReference type="AGR" id="RGD:1304968"/>
<dbReference type="CTD" id="51319"/>
<dbReference type="RGD" id="1304968">
    <property type="gene designation" value="Rsrc1"/>
</dbReference>
<dbReference type="eggNOG" id="KOG3406">
    <property type="taxonomic scope" value="Eukaryota"/>
</dbReference>
<dbReference type="GeneTree" id="ENSGT00730000111251"/>
<dbReference type="InParanoid" id="Q5PPJ2"/>
<dbReference type="OMA" id="NYRQKYM"/>
<dbReference type="OrthoDB" id="9946564at2759"/>
<dbReference type="PhylomeDB" id="Q5PPJ2"/>
<dbReference type="PRO" id="PR:Q5PPJ2"/>
<dbReference type="Proteomes" id="UP000002494">
    <property type="component" value="Chromosome 2"/>
</dbReference>
<dbReference type="GO" id="GO:0005737">
    <property type="term" value="C:cytoplasm"/>
    <property type="evidence" value="ECO:0000250"/>
    <property type="project" value="UniProtKB"/>
</dbReference>
<dbReference type="GO" id="GO:0016607">
    <property type="term" value="C:nuclear speck"/>
    <property type="evidence" value="ECO:0000250"/>
    <property type="project" value="UniProtKB"/>
</dbReference>
<dbReference type="GO" id="GO:0005634">
    <property type="term" value="C:nucleus"/>
    <property type="evidence" value="ECO:0000250"/>
    <property type="project" value="UniProtKB"/>
</dbReference>
<dbReference type="GO" id="GO:0000380">
    <property type="term" value="P:alternative mRNA splicing, via spliceosome"/>
    <property type="evidence" value="ECO:0000266"/>
    <property type="project" value="RGD"/>
</dbReference>
<dbReference type="GO" id="GO:0000398">
    <property type="term" value="P:mRNA splicing, via spliceosome"/>
    <property type="evidence" value="ECO:0000250"/>
    <property type="project" value="UniProtKB"/>
</dbReference>
<dbReference type="GO" id="GO:0006913">
    <property type="term" value="P:nucleocytoplasmic transport"/>
    <property type="evidence" value="ECO:0000250"/>
    <property type="project" value="UniProtKB"/>
</dbReference>
<dbReference type="GO" id="GO:0046677">
    <property type="term" value="P:response to antibiotic"/>
    <property type="evidence" value="ECO:0000266"/>
    <property type="project" value="RGD"/>
</dbReference>
<dbReference type="GO" id="GO:0008380">
    <property type="term" value="P:RNA splicing"/>
    <property type="evidence" value="ECO:0000266"/>
    <property type="project" value="RGD"/>
</dbReference>
<dbReference type="InterPro" id="IPR034604">
    <property type="entry name" value="SRRP53"/>
</dbReference>
<dbReference type="PANTHER" id="PTHR31968">
    <property type="entry name" value="SERINE/ARGININE-RELATED PROTEIN 53"/>
    <property type="match status" value="1"/>
</dbReference>
<dbReference type="PANTHER" id="PTHR31968:SF4">
    <property type="entry name" value="SERINE_ARGININE-RELATED PROTEIN 53"/>
    <property type="match status" value="1"/>
</dbReference>
<proteinExistence type="evidence at transcript level"/>